<keyword id="KW-0002">3D-structure</keyword>
<keyword id="KW-0998">Cell outer membrane</keyword>
<keyword id="KW-0868">Chloride</keyword>
<keyword id="KW-0406">Ion transport</keyword>
<keyword id="KW-0472">Membrane</keyword>
<keyword id="KW-0626">Porin</keyword>
<keyword id="KW-1185">Reference proteome</keyword>
<keyword id="KW-0732">Signal</keyword>
<keyword id="KW-0346">Stress response</keyword>
<keyword id="KW-0812">Transmembrane</keyword>
<keyword id="KW-1134">Transmembrane beta strand</keyword>
<keyword id="KW-0813">Transport</keyword>
<name>PORO_PSEAE</name>
<gene>
    <name type="primary">oprO</name>
    <name type="ordered locus">PA3280</name>
</gene>
<feature type="signal peptide" evidence="1">
    <location>
        <begin position="1"/>
        <end position="24"/>
    </location>
</feature>
<feature type="chain" id="PRO_0000025211" description="Porin O">
    <location>
        <begin position="25"/>
        <end position="438"/>
    </location>
</feature>
<feature type="strand" evidence="3">
    <location>
        <begin position="30"/>
        <end position="32"/>
    </location>
</feature>
<feature type="strand" evidence="3">
    <location>
        <begin position="34"/>
        <end position="37"/>
    </location>
</feature>
<feature type="strand" evidence="3">
    <location>
        <begin position="39"/>
        <end position="46"/>
    </location>
</feature>
<feature type="strand" evidence="3">
    <location>
        <begin position="52"/>
        <end position="66"/>
    </location>
</feature>
<feature type="helix" evidence="3">
    <location>
        <begin position="68"/>
        <end position="70"/>
    </location>
</feature>
<feature type="strand" evidence="3">
    <location>
        <begin position="71"/>
        <end position="75"/>
    </location>
</feature>
<feature type="strand" evidence="3">
    <location>
        <begin position="77"/>
        <end position="93"/>
    </location>
</feature>
<feature type="turn" evidence="3">
    <location>
        <begin position="94"/>
        <end position="96"/>
    </location>
</feature>
<feature type="strand" evidence="3">
    <location>
        <begin position="97"/>
        <end position="104"/>
    </location>
</feature>
<feature type="strand" evidence="3">
    <location>
        <begin position="109"/>
        <end position="111"/>
    </location>
</feature>
<feature type="turn" evidence="3">
    <location>
        <begin position="112"/>
        <end position="114"/>
    </location>
</feature>
<feature type="strand" evidence="3">
    <location>
        <begin position="117"/>
        <end position="124"/>
    </location>
</feature>
<feature type="turn" evidence="3">
    <location>
        <begin position="126"/>
        <end position="129"/>
    </location>
</feature>
<feature type="strand" evidence="3">
    <location>
        <begin position="130"/>
        <end position="136"/>
    </location>
</feature>
<feature type="helix" evidence="3">
    <location>
        <begin position="143"/>
        <end position="146"/>
    </location>
</feature>
<feature type="turn" evidence="3">
    <location>
        <begin position="149"/>
        <end position="151"/>
    </location>
</feature>
<feature type="strand" evidence="3">
    <location>
        <begin position="153"/>
        <end position="156"/>
    </location>
</feature>
<feature type="helix" evidence="3">
    <location>
        <begin position="161"/>
        <end position="163"/>
    </location>
</feature>
<feature type="helix" evidence="3">
    <location>
        <begin position="165"/>
        <end position="168"/>
    </location>
</feature>
<feature type="strand" evidence="3">
    <location>
        <begin position="174"/>
        <end position="182"/>
    </location>
</feature>
<feature type="turn" evidence="3">
    <location>
        <begin position="183"/>
        <end position="185"/>
    </location>
</feature>
<feature type="strand" evidence="3">
    <location>
        <begin position="186"/>
        <end position="199"/>
    </location>
</feature>
<feature type="strand" evidence="3">
    <location>
        <begin position="204"/>
        <end position="219"/>
    </location>
</feature>
<feature type="strand" evidence="3">
    <location>
        <begin position="222"/>
        <end position="234"/>
    </location>
</feature>
<feature type="helix" evidence="3">
    <location>
        <begin position="251"/>
        <end position="253"/>
    </location>
</feature>
<feature type="strand" evidence="3">
    <location>
        <begin position="256"/>
        <end position="259"/>
    </location>
</feature>
<feature type="helix" evidence="3">
    <location>
        <begin position="262"/>
        <end position="264"/>
    </location>
</feature>
<feature type="strand" evidence="3">
    <location>
        <begin position="280"/>
        <end position="295"/>
    </location>
</feature>
<feature type="strand" evidence="3">
    <location>
        <begin position="298"/>
        <end position="311"/>
    </location>
</feature>
<feature type="strand" evidence="3">
    <location>
        <begin position="319"/>
        <end position="331"/>
    </location>
</feature>
<feature type="strand" evidence="4">
    <location>
        <begin position="337"/>
        <end position="340"/>
    </location>
</feature>
<feature type="turn" evidence="3">
    <location>
        <begin position="341"/>
        <end position="344"/>
    </location>
</feature>
<feature type="strand" evidence="4">
    <location>
        <begin position="345"/>
        <end position="349"/>
    </location>
</feature>
<feature type="turn" evidence="3">
    <location>
        <begin position="354"/>
        <end position="356"/>
    </location>
</feature>
<feature type="strand" evidence="3">
    <location>
        <begin position="358"/>
        <end position="372"/>
    </location>
</feature>
<feature type="strand" evidence="3">
    <location>
        <begin position="380"/>
        <end position="382"/>
    </location>
</feature>
<feature type="strand" evidence="3">
    <location>
        <begin position="387"/>
        <end position="399"/>
    </location>
</feature>
<feature type="strand" evidence="3">
    <location>
        <begin position="401"/>
        <end position="418"/>
    </location>
</feature>
<feature type="strand" evidence="3">
    <location>
        <begin position="425"/>
        <end position="438"/>
    </location>
</feature>
<accession>P32977</accession>
<comment type="function">
    <text>Anion specific, the binding site has higher affinity for phosphate than chloride ions. Porin O has a higher affinity for polyphosphates (tripolyphosphate and pyrophosphate) while porin P has a higher affinity for orthophosphate.</text>
</comment>
<comment type="subcellular location">
    <subcellularLocation>
        <location>Cell outer membrane</location>
        <topology>Multi-pass membrane protein</topology>
    </subcellularLocation>
</comment>
<comment type="developmental stage">
    <text>Expressed only during the stationary growth phase.</text>
</comment>
<comment type="induction">
    <text>By phosphate starvation.</text>
</comment>
<comment type="similarity">
    <text evidence="2">Belongs to the OprO/OprP family.</text>
</comment>
<organism>
    <name type="scientific">Pseudomonas aeruginosa (strain ATCC 15692 / DSM 22644 / CIP 104116 / JCM 14847 / LMG 12228 / 1C / PRS 101 / PAO1)</name>
    <dbReference type="NCBI Taxonomy" id="208964"/>
    <lineage>
        <taxon>Bacteria</taxon>
        <taxon>Pseudomonadati</taxon>
        <taxon>Pseudomonadota</taxon>
        <taxon>Gammaproteobacteria</taxon>
        <taxon>Pseudomonadales</taxon>
        <taxon>Pseudomonadaceae</taxon>
        <taxon>Pseudomonas</taxon>
    </lineage>
</organism>
<evidence type="ECO:0000255" key="1"/>
<evidence type="ECO:0000305" key="2"/>
<evidence type="ECO:0007829" key="3">
    <source>
        <dbReference type="PDB" id="4RJW"/>
    </source>
</evidence>
<evidence type="ECO:0007829" key="4">
    <source>
        <dbReference type="PDB" id="4RJX"/>
    </source>
</evidence>
<proteinExistence type="evidence at protein level"/>
<protein>
    <recommendedName>
        <fullName>Porin O</fullName>
    </recommendedName>
</protein>
<sequence length="438" mass="47788">MIRKHSLGFVASALALAVSAQAFAGTVTTDGADIVIKTKGGLEVATTDKEFSFKLGGRLQADYSRFDGFYTKNGNTADAAYFRRAFIELGGTAYKDWKYQINFDLSHNTGSSDNGYFDEASVTYTGFNPVNLKFGRFDPDFGLEKATSSKWVTAPERNAAYELADWINTHQDGMGAQVNSTLADMAYLSAGVSAKDADDSDGDSVKQFNFRGVFAPMHEAGNVLHVGVNYAYRDLDDTAFDSRIRPRLGMRGIATSGGNDAGDNGNRATFGGVSNSPAGSYKDDSVWGLEGAWAMGPFSAQAEYLARKLKADDNAYKDIKAKGYYAQLAYTLTGESRQYKLEGAKFDSVKPENKEIGAWEVFYRYDNIKVEDDNVVADTATREVGDTKAKAHNLGVNWYVNDAVKISAAYVKAKTDKITNNNGDDDGDGFVTRLQYVF</sequence>
<dbReference type="EMBL" id="M86648">
    <property type="protein sequence ID" value="AAA25912.1"/>
    <property type="molecule type" value="Genomic_DNA"/>
</dbReference>
<dbReference type="EMBL" id="AE004091">
    <property type="protein sequence ID" value="AAG06668.1"/>
    <property type="molecule type" value="Genomic_DNA"/>
</dbReference>
<dbReference type="PIR" id="S25260">
    <property type="entry name" value="S25260"/>
</dbReference>
<dbReference type="RefSeq" id="NP_251970.1">
    <property type="nucleotide sequence ID" value="NC_002516.2"/>
</dbReference>
<dbReference type="RefSeq" id="WP_003104423.1">
    <property type="nucleotide sequence ID" value="NZ_QZGE01000019.1"/>
</dbReference>
<dbReference type="PDB" id="4RJW">
    <property type="method" value="X-ray"/>
    <property type="resolution" value="1.52 A"/>
    <property type="chains" value="A=25-438"/>
</dbReference>
<dbReference type="PDB" id="4RJX">
    <property type="method" value="X-ray"/>
    <property type="resolution" value="1.54 A"/>
    <property type="chains" value="A=25-438"/>
</dbReference>
<dbReference type="PDBsum" id="4RJW"/>
<dbReference type="PDBsum" id="4RJX"/>
<dbReference type="SMR" id="P32977"/>
<dbReference type="STRING" id="208964.PA3280"/>
<dbReference type="TCDB" id="1.B.5.1.2">
    <property type="family name" value="the pseudomonas oprp porin (pop) family"/>
</dbReference>
<dbReference type="PaxDb" id="208964-PA3280"/>
<dbReference type="GeneID" id="882443"/>
<dbReference type="KEGG" id="pae:PA3280"/>
<dbReference type="PATRIC" id="fig|208964.12.peg.3430"/>
<dbReference type="PseudoCAP" id="PA3280"/>
<dbReference type="HOGENOM" id="CLU_031025_4_1_6"/>
<dbReference type="InParanoid" id="P32977"/>
<dbReference type="OrthoDB" id="9807854at2"/>
<dbReference type="PhylomeDB" id="P32977"/>
<dbReference type="BioCyc" id="PAER208964:G1FZ6-3341-MONOMER"/>
<dbReference type="EvolutionaryTrace" id="P32977"/>
<dbReference type="Proteomes" id="UP000002438">
    <property type="component" value="Chromosome"/>
</dbReference>
<dbReference type="GO" id="GO:0009279">
    <property type="term" value="C:cell outer membrane"/>
    <property type="evidence" value="ECO:0007669"/>
    <property type="project" value="UniProtKB-SubCell"/>
</dbReference>
<dbReference type="GO" id="GO:0046930">
    <property type="term" value="C:pore complex"/>
    <property type="evidence" value="ECO:0007669"/>
    <property type="project" value="UniProtKB-KW"/>
</dbReference>
<dbReference type="GO" id="GO:0015288">
    <property type="term" value="F:porin activity"/>
    <property type="evidence" value="ECO:0007669"/>
    <property type="project" value="UniProtKB-KW"/>
</dbReference>
<dbReference type="GO" id="GO:0006811">
    <property type="term" value="P:monoatomic ion transport"/>
    <property type="evidence" value="ECO:0007669"/>
    <property type="project" value="UniProtKB-KW"/>
</dbReference>
<dbReference type="Gene3D" id="2.40.160.10">
    <property type="entry name" value="Porin"/>
    <property type="match status" value="1"/>
</dbReference>
<dbReference type="InterPro" id="IPR023614">
    <property type="entry name" value="Porin_dom_sf"/>
</dbReference>
<dbReference type="InterPro" id="IPR010870">
    <property type="entry name" value="Porin_O/P"/>
</dbReference>
<dbReference type="Pfam" id="PF07396">
    <property type="entry name" value="Porin_O_P"/>
    <property type="match status" value="1"/>
</dbReference>
<dbReference type="SUPFAM" id="SSF56935">
    <property type="entry name" value="Porins"/>
    <property type="match status" value="1"/>
</dbReference>
<reference key="1">
    <citation type="journal article" date="1992" name="Mol. Microbiol.">
        <title>Polyphosphate-selective porin OprO of Pseudomonas aeruginosa: expression, purification and sequence.</title>
        <authorList>
            <person name="Siehnel R.J."/>
            <person name="Egli C."/>
            <person name="Hancock R.E.W."/>
        </authorList>
    </citation>
    <scope>NUCLEOTIDE SEQUENCE [GENOMIC DNA]</scope>
    <source>
        <strain>ATCC 15692 / PAO1 / H103</strain>
    </source>
</reference>
<reference key="2">
    <citation type="journal article" date="2000" name="Nature">
        <title>Complete genome sequence of Pseudomonas aeruginosa PAO1, an opportunistic pathogen.</title>
        <authorList>
            <person name="Stover C.K."/>
            <person name="Pham X.-Q.T."/>
            <person name="Erwin A.L."/>
            <person name="Mizoguchi S.D."/>
            <person name="Warrener P."/>
            <person name="Hickey M.J."/>
            <person name="Brinkman F.S.L."/>
            <person name="Hufnagle W.O."/>
            <person name="Kowalik D.J."/>
            <person name="Lagrou M."/>
            <person name="Garber R.L."/>
            <person name="Goltry L."/>
            <person name="Tolentino E."/>
            <person name="Westbrock-Wadman S."/>
            <person name="Yuan Y."/>
            <person name="Brody L.L."/>
            <person name="Coulter S.N."/>
            <person name="Folger K.R."/>
            <person name="Kas A."/>
            <person name="Larbig K."/>
            <person name="Lim R.M."/>
            <person name="Smith K.A."/>
            <person name="Spencer D.H."/>
            <person name="Wong G.K.-S."/>
            <person name="Wu Z."/>
            <person name="Paulsen I.T."/>
            <person name="Reizer J."/>
            <person name="Saier M.H. Jr."/>
            <person name="Hancock R.E.W."/>
            <person name="Lory S."/>
            <person name="Olson M.V."/>
        </authorList>
    </citation>
    <scope>NUCLEOTIDE SEQUENCE [LARGE SCALE GENOMIC DNA]</scope>
    <source>
        <strain>ATCC 15692 / DSM 22644 / CIP 104116 / JCM 14847 / LMG 12228 / 1C / PRS 101 / PAO1</strain>
    </source>
</reference>